<reference key="1">
    <citation type="submission" date="2007-10" db="EMBL/GenBank/DDBJ databases">
        <title>Genome sequence of Campylobacter concisus 13826 isolated from human feces.</title>
        <authorList>
            <person name="Fouts D.E."/>
            <person name="Mongodin E.F."/>
            <person name="Puiu D."/>
            <person name="Sebastian Y."/>
            <person name="Miller W.G."/>
            <person name="Mandrell R.E."/>
            <person name="On S."/>
            <person name="Nelson K.E."/>
        </authorList>
    </citation>
    <scope>NUCLEOTIDE SEQUENCE [LARGE SCALE GENOMIC DNA]</scope>
    <source>
        <strain>13826</strain>
    </source>
</reference>
<proteinExistence type="inferred from homology"/>
<evidence type="ECO:0000255" key="1">
    <source>
        <dbReference type="HAMAP-Rule" id="MF_01328"/>
    </source>
</evidence>
<evidence type="ECO:0000256" key="2">
    <source>
        <dbReference type="SAM" id="MobiDB-lite"/>
    </source>
</evidence>
<evidence type="ECO:0000305" key="3"/>
<name>RL4_CAMC1</name>
<comment type="function">
    <text evidence="1">One of the primary rRNA binding proteins, this protein initially binds near the 5'-end of the 23S rRNA. It is important during the early stages of 50S assembly. It makes multiple contacts with different domains of the 23S rRNA in the assembled 50S subunit and ribosome.</text>
</comment>
<comment type="function">
    <text evidence="1">Forms part of the polypeptide exit tunnel.</text>
</comment>
<comment type="subunit">
    <text evidence="1">Part of the 50S ribosomal subunit.</text>
</comment>
<comment type="similarity">
    <text evidence="1">Belongs to the universal ribosomal protein uL4 family.</text>
</comment>
<protein>
    <recommendedName>
        <fullName evidence="1">Large ribosomal subunit protein uL4</fullName>
    </recommendedName>
    <alternativeName>
        <fullName evidence="3">50S ribosomal protein L4</fullName>
    </alternativeName>
</protein>
<dbReference type="EMBL" id="CP000792">
    <property type="protein sequence ID" value="EAT97240.2"/>
    <property type="molecule type" value="Genomic_DNA"/>
</dbReference>
<dbReference type="RefSeq" id="WP_012140561.1">
    <property type="nucleotide sequence ID" value="NC_009802.2"/>
</dbReference>
<dbReference type="SMR" id="A7ZG11"/>
<dbReference type="STRING" id="360104.CCC13826_0354"/>
<dbReference type="GeneID" id="28663434"/>
<dbReference type="KEGG" id="cco:CCC13826_0354"/>
<dbReference type="eggNOG" id="COG0088">
    <property type="taxonomic scope" value="Bacteria"/>
</dbReference>
<dbReference type="HOGENOM" id="CLU_041575_5_2_7"/>
<dbReference type="OrthoDB" id="9803201at2"/>
<dbReference type="Proteomes" id="UP000001121">
    <property type="component" value="Chromosome"/>
</dbReference>
<dbReference type="GO" id="GO:1990904">
    <property type="term" value="C:ribonucleoprotein complex"/>
    <property type="evidence" value="ECO:0007669"/>
    <property type="project" value="UniProtKB-KW"/>
</dbReference>
<dbReference type="GO" id="GO:0005840">
    <property type="term" value="C:ribosome"/>
    <property type="evidence" value="ECO:0007669"/>
    <property type="project" value="UniProtKB-KW"/>
</dbReference>
<dbReference type="GO" id="GO:0019843">
    <property type="term" value="F:rRNA binding"/>
    <property type="evidence" value="ECO:0007669"/>
    <property type="project" value="UniProtKB-UniRule"/>
</dbReference>
<dbReference type="GO" id="GO:0003735">
    <property type="term" value="F:structural constituent of ribosome"/>
    <property type="evidence" value="ECO:0007669"/>
    <property type="project" value="InterPro"/>
</dbReference>
<dbReference type="GO" id="GO:0006412">
    <property type="term" value="P:translation"/>
    <property type="evidence" value="ECO:0007669"/>
    <property type="project" value="UniProtKB-UniRule"/>
</dbReference>
<dbReference type="FunFam" id="3.40.1370.10:FF:000008">
    <property type="entry name" value="50S ribosomal protein L4"/>
    <property type="match status" value="1"/>
</dbReference>
<dbReference type="Gene3D" id="3.40.1370.10">
    <property type="match status" value="1"/>
</dbReference>
<dbReference type="HAMAP" id="MF_01328_B">
    <property type="entry name" value="Ribosomal_uL4_B"/>
    <property type="match status" value="1"/>
</dbReference>
<dbReference type="InterPro" id="IPR002136">
    <property type="entry name" value="Ribosomal_uL4"/>
</dbReference>
<dbReference type="InterPro" id="IPR013005">
    <property type="entry name" value="Ribosomal_uL4-like"/>
</dbReference>
<dbReference type="InterPro" id="IPR023574">
    <property type="entry name" value="Ribosomal_uL4_dom_sf"/>
</dbReference>
<dbReference type="NCBIfam" id="TIGR03953">
    <property type="entry name" value="rplD_bact"/>
    <property type="match status" value="1"/>
</dbReference>
<dbReference type="PANTHER" id="PTHR10746">
    <property type="entry name" value="50S RIBOSOMAL PROTEIN L4"/>
    <property type="match status" value="1"/>
</dbReference>
<dbReference type="PANTHER" id="PTHR10746:SF6">
    <property type="entry name" value="LARGE RIBOSOMAL SUBUNIT PROTEIN UL4M"/>
    <property type="match status" value="1"/>
</dbReference>
<dbReference type="Pfam" id="PF00573">
    <property type="entry name" value="Ribosomal_L4"/>
    <property type="match status" value="1"/>
</dbReference>
<dbReference type="SUPFAM" id="SSF52166">
    <property type="entry name" value="Ribosomal protein L4"/>
    <property type="match status" value="1"/>
</dbReference>
<feature type="chain" id="PRO_1000052375" description="Large ribosomal subunit protein uL4">
    <location>
        <begin position="1"/>
        <end position="204"/>
    </location>
</feature>
<feature type="region of interest" description="Disordered" evidence="2">
    <location>
        <begin position="53"/>
        <end position="73"/>
    </location>
</feature>
<keyword id="KW-0687">Ribonucleoprotein</keyword>
<keyword id="KW-0689">Ribosomal protein</keyword>
<keyword id="KW-0694">RNA-binding</keyword>
<keyword id="KW-0699">rRNA-binding</keyword>
<accession>A7ZG11</accession>
<sequence>MSKIHVLNDKFENSGELELPASYAEVNPHNLYLYVKSYLAGIRANSAHTKSRAFVSGGGKKPWRQKGRGGARAGSTRTNVWVGGAVAFGPTNEKNYFQKVNKKQKRLALEYALAVKAQDGKIFAVDSISIESGKTKDAANIIKNLKVKDALIVKDLLDDKTLLAFRNLANCYVVDANEVNAYLVSTFSSVIIEKAALKTITKEG</sequence>
<organism>
    <name type="scientific">Campylobacter concisus (strain 13826)</name>
    <dbReference type="NCBI Taxonomy" id="360104"/>
    <lineage>
        <taxon>Bacteria</taxon>
        <taxon>Pseudomonadati</taxon>
        <taxon>Campylobacterota</taxon>
        <taxon>Epsilonproteobacteria</taxon>
        <taxon>Campylobacterales</taxon>
        <taxon>Campylobacteraceae</taxon>
        <taxon>Campylobacter</taxon>
    </lineage>
</organism>
<gene>
    <name evidence="1" type="primary">rplD</name>
    <name type="ordered locus">Ccon26_18840</name>
    <name type="ORF">CCC13826_0354</name>
</gene>